<organism>
    <name type="scientific">Gallid herpesvirus 2 (strain Chicken/Md5/ATCC VR-987)</name>
    <name type="common">GaHV-2</name>
    <name type="synonym">Marek's disease herpesvirus type 1</name>
    <dbReference type="NCBI Taxonomy" id="10389"/>
    <lineage>
        <taxon>Viruses</taxon>
        <taxon>Duplodnaviria</taxon>
        <taxon>Heunggongvirae</taxon>
        <taxon>Peploviricota</taxon>
        <taxon>Herviviricetes</taxon>
        <taxon>Herpesvirales</taxon>
        <taxon>Orthoherpesviridae</taxon>
        <taxon>Alphaherpesvirinae</taxon>
        <taxon>Mardivirus</taxon>
        <taxon>Mardivirus gallidalpha2</taxon>
        <taxon>Gallid alphaherpesvirus 2</taxon>
    </lineage>
</organism>
<protein>
    <recommendedName>
        <fullName>Uncharacterized gene 1 protein</fullName>
    </recommendedName>
</protein>
<reference key="1">
    <citation type="journal article" date="2000" name="J. Virol.">
        <title>The genome of a very virulent Marek's disease virus.</title>
        <authorList>
            <person name="Tulman E.R."/>
            <person name="Afonso C.L."/>
            <person name="Lu Z."/>
            <person name="Zsak L."/>
            <person name="Rock D.L."/>
            <person name="Kutish G.F."/>
        </authorList>
    </citation>
    <scope>NUCLEOTIDE SEQUENCE [LARGE SCALE GENOMIC DNA]</scope>
</reference>
<feature type="signal peptide" evidence="1">
    <location>
        <begin position="1"/>
        <end position="26"/>
    </location>
</feature>
<feature type="chain" id="PRO_0000406549" description="Uncharacterized gene 1 protein">
    <location>
        <begin position="27"/>
        <end position="219"/>
    </location>
</feature>
<feature type="region of interest" description="Disordered" evidence="2">
    <location>
        <begin position="36"/>
        <end position="57"/>
    </location>
</feature>
<feature type="region of interest" description="Disordered" evidence="2">
    <location>
        <begin position="88"/>
        <end position="219"/>
    </location>
</feature>
<feature type="compositionally biased region" description="Low complexity" evidence="2">
    <location>
        <begin position="127"/>
        <end position="173"/>
    </location>
</feature>
<feature type="compositionally biased region" description="Basic residues" evidence="2">
    <location>
        <begin position="176"/>
        <end position="202"/>
    </location>
</feature>
<evidence type="ECO:0000255" key="1"/>
<evidence type="ECO:0000256" key="2">
    <source>
        <dbReference type="SAM" id="MobiDB-lite"/>
    </source>
</evidence>
<organismHost>
    <name type="scientific">Gallus gallus</name>
    <name type="common">Chicken</name>
    <dbReference type="NCBI Taxonomy" id="9031"/>
</organismHost>
<sequence length="219" mass="22173">MNDRGVPNSRTGPSLLALLPAANSYAAAYSPANRRAVGVGGGSYKSPTRGSPGTRGGWKAPLCLTLIGGIDGTVAALPPPAVYSLTFSGLGEPPQGAPRRGGGGADAGERTERGSTANKKKRQRGVLSPPSALGSSPAGRGRPAPAIAAAKSSPLSASAAPGRCGARPRAPSRATRERRPRGNPRAPLRRGARGRRRSHTRGPARTTVGAVEPRAGLCE</sequence>
<keyword id="KW-1185">Reference proteome</keyword>
<keyword id="KW-0732">Signal</keyword>
<dbReference type="EMBL" id="AF243438">
    <property type="protein sequence ID" value="AAG14186.1"/>
    <property type="molecule type" value="Genomic_DNA"/>
</dbReference>
<dbReference type="EMBL" id="AF243438">
    <property type="protein sequence ID" value="AAG14275.1"/>
    <property type="molecule type" value="Genomic_DNA"/>
</dbReference>
<dbReference type="Proteomes" id="UP000008072">
    <property type="component" value="Segment"/>
</dbReference>
<gene>
    <name type="primary">MDV001</name>
    <name type="synonym">MDV080</name>
</gene>
<name>VG01_GAHVM</name>
<proteinExistence type="inferred from homology"/>
<accession>Q77MT6</accession>